<gene>
    <name evidence="1" type="primary">M</name>
</gene>
<evidence type="ECO:0000255" key="1">
    <source>
        <dbReference type="HAMAP-Rule" id="MF_04069"/>
    </source>
</evidence>
<evidence type="ECO:0000256" key="2">
    <source>
        <dbReference type="SAM" id="MobiDB-lite"/>
    </source>
</evidence>
<dbReference type="EMBL" id="M63527">
    <property type="protein sequence ID" value="AAA43348.1"/>
    <property type="molecule type" value="Genomic_RNA"/>
</dbReference>
<dbReference type="EMBL" id="CY005907">
    <property type="protein sequence ID" value="ABB21821.1"/>
    <property type="molecule type" value="Genomic_RNA"/>
</dbReference>
<dbReference type="SMR" id="Q67210"/>
<dbReference type="Proteomes" id="UP000008579">
    <property type="component" value="Genome"/>
</dbReference>
<dbReference type="GO" id="GO:0020002">
    <property type="term" value="C:host cell plasma membrane"/>
    <property type="evidence" value="ECO:0007669"/>
    <property type="project" value="UniProtKB-SubCell"/>
</dbReference>
<dbReference type="GO" id="GO:0016020">
    <property type="term" value="C:membrane"/>
    <property type="evidence" value="ECO:0007669"/>
    <property type="project" value="UniProtKB-UniRule"/>
</dbReference>
<dbReference type="GO" id="GO:0055036">
    <property type="term" value="C:virion membrane"/>
    <property type="evidence" value="ECO:0007669"/>
    <property type="project" value="UniProtKB-SubCell"/>
</dbReference>
<dbReference type="GO" id="GO:0005216">
    <property type="term" value="F:monoatomic ion channel activity"/>
    <property type="evidence" value="ECO:0007669"/>
    <property type="project" value="UniProtKB-UniRule"/>
</dbReference>
<dbReference type="GO" id="GO:0015078">
    <property type="term" value="F:proton transmembrane transporter activity"/>
    <property type="evidence" value="ECO:0007669"/>
    <property type="project" value="UniProtKB-UniRule"/>
</dbReference>
<dbReference type="GO" id="GO:0051259">
    <property type="term" value="P:protein complex oligomerization"/>
    <property type="evidence" value="ECO:0007669"/>
    <property type="project" value="UniProtKB-UniRule"/>
</dbReference>
<dbReference type="GO" id="GO:0044694">
    <property type="term" value="P:symbiont genome entry into host cell via pore formation in plasma membrane"/>
    <property type="evidence" value="ECO:0007669"/>
    <property type="project" value="UniProtKB-UniRule"/>
</dbReference>
<dbReference type="GO" id="GO:0140321">
    <property type="term" value="P:symbiont-mediated suppression of host autophagy"/>
    <property type="evidence" value="ECO:0007669"/>
    <property type="project" value="UniProtKB-KW"/>
</dbReference>
<dbReference type="Gene3D" id="6.10.250.1640">
    <property type="match status" value="1"/>
</dbReference>
<dbReference type="HAMAP" id="MF_04069">
    <property type="entry name" value="INFV_M2"/>
    <property type="match status" value="1"/>
</dbReference>
<dbReference type="InterPro" id="IPR002089">
    <property type="entry name" value="Flu_M2"/>
</dbReference>
<dbReference type="Pfam" id="PF00599">
    <property type="entry name" value="Flu_M2"/>
    <property type="match status" value="1"/>
</dbReference>
<proteinExistence type="inferred from homology"/>
<accession>Q67210</accession>
<accession>Q20NP2</accession>
<name>M2_I80A8</name>
<comment type="function">
    <text evidence="1">Forms a proton-selective ion channel that is necessary for the efficient release of the viral genome during virus entry. After attaching to the cell surface, the virion enters the cell by endocytosis. Acidification of the endosome triggers M2 ion channel activity. The influx of protons into virion interior is believed to disrupt interactions between the viral ribonucleoprotein (RNP), matrix protein 1 (M1), and lipid bilayers, thereby freeing the viral genome from interaction with viral proteins and enabling RNA segments to migrate to the host cell nucleus, where influenza virus RNA transcription and replication occur. Also plays a role in viral proteins secretory pathway. Elevates the intravesicular pH of normally acidic compartments, such as trans-Golgi network, preventing newly formed hemagglutinin from premature switching to the fusion-active conformation.</text>
</comment>
<comment type="activity regulation">
    <text>The M2 protein from most influenza A strains is inhibited by amantadine and rimantadine, resulting in viral uncoating incapacity. Emergence of amantadine-resistant variants is usually rapid.</text>
</comment>
<comment type="subunit">
    <text evidence="1">Homotetramer; composed of two disulfide-linked dimers held together by non-covalent interactions. May interact with matrix protein 1.</text>
</comment>
<comment type="subcellular location">
    <subcellularLocation>
        <location evidence="1">Virion membrane</location>
    </subcellularLocation>
    <subcellularLocation>
        <location evidence="1">Host apical cell membrane</location>
        <topology evidence="1">Single-pass type III membrane protein</topology>
    </subcellularLocation>
    <text evidence="1">Abundantly expressed at the apical plasma membrane in infected polarized epithelial cells, in close proximity to budding and assembled virions. Minor component of virions (only 16-20 molecules/virion).</text>
</comment>
<comment type="alternative products">
    <event type="alternative splicing"/>
    <isoform>
        <id>Q67210-1</id>
        <name>M2</name>
        <sequence type="displayed"/>
    </isoform>
    <isoform>
        <id>Q76V05-1</id>
        <name>M1</name>
        <sequence type="external"/>
    </isoform>
    <text>Only the first 9 residues are shared by the 2 isoforms.</text>
</comment>
<comment type="domain">
    <text evidence="1">Cytoplasmic tail plays an important role in virion assembly and morphogenesis.</text>
</comment>
<comment type="miscellaneous">
    <text evidence="1">When the channel is activated, one or more imidazole moieties of His-37 probably become bi-protonated.</text>
</comment>
<comment type="similarity">
    <text evidence="1">Belongs to the influenza viruses matrix protein M2 family.</text>
</comment>
<feature type="chain" id="PRO_0000326372" description="Matrix protein 2">
    <location>
        <begin position="1"/>
        <end position="97"/>
    </location>
</feature>
<feature type="topological domain" description="Virion surface" evidence="1">
    <location>
        <begin position="1"/>
        <end position="22"/>
    </location>
</feature>
<feature type="transmembrane region" description="Helical; Signal-anchor for type III membrane protein" evidence="1">
    <location>
        <begin position="23"/>
        <end position="43"/>
    </location>
</feature>
<feature type="topological domain" description="Intravirion" evidence="1">
    <location>
        <begin position="44"/>
        <end position="97"/>
    </location>
</feature>
<feature type="region of interest" description="Disordered" evidence="2">
    <location>
        <begin position="61"/>
        <end position="80"/>
    </location>
</feature>
<feature type="site" description="Essential for channel activity, possibly by being protonated during channel activation, and by forming the channel gate and the selective filter" evidence="1">
    <location>
        <position position="37"/>
    </location>
</feature>
<feature type="site" description="Seems to be involved in pH gating" evidence="1">
    <location>
        <position position="41"/>
    </location>
</feature>
<feature type="modified residue" description="Phosphoserine; by host" evidence="1">
    <location>
        <position position="64"/>
    </location>
</feature>
<feature type="lipid moiety-binding region" description="S-palmitoyl cysteine; by host" evidence="1">
    <location>
        <position position="50"/>
    </location>
</feature>
<feature type="disulfide bond" description="Interchain (with C-17)" evidence="1">
    <location>
        <position position="17"/>
    </location>
</feature>
<feature type="disulfide bond" description="Interchain (with C-19)" evidence="1">
    <location>
        <position position="19"/>
    </location>
</feature>
<reference key="1">
    <citation type="journal article" date="1991" name="J. Virol.">
        <title>Evolutionary analysis of the influenza A virus M gene with comparison of the M1 and M2 proteins.</title>
        <authorList>
            <person name="Ito T."/>
            <person name="Gorman O.T."/>
            <person name="Kawaoka Y."/>
            <person name="Bean W.J."/>
            <person name="Webster R.G."/>
        </authorList>
    </citation>
    <scope>NUCLEOTIDE SEQUENCE [GENOMIC RNA]</scope>
</reference>
<reference key="2">
    <citation type="journal article" date="2006" name="Science">
        <title>Large-scale sequence analysis of avian influenza isolates.</title>
        <authorList>
            <person name="Obenauer J.C."/>
            <person name="Denson J."/>
            <person name="Mehta P.K."/>
            <person name="Su X."/>
            <person name="Mukatira S."/>
            <person name="Finkelstein D.B."/>
            <person name="Xu X."/>
            <person name="Wang J."/>
            <person name="Ma J."/>
            <person name="Fan Y."/>
            <person name="Rakestraw K.M."/>
            <person name="Webster R.G."/>
            <person name="Hoffmann E."/>
            <person name="Krauss S."/>
            <person name="Zheng J."/>
            <person name="Zhang Z."/>
            <person name="Naeve C.W."/>
        </authorList>
    </citation>
    <scope>NUCLEOTIDE SEQUENCE [GENOMIC RNA]</scope>
</reference>
<organismHost>
    <name type="scientific">Aves</name>
    <dbReference type="NCBI Taxonomy" id="8782"/>
</organismHost>
<protein>
    <recommendedName>
        <fullName evidence="1">Matrix protein 2</fullName>
    </recommendedName>
    <alternativeName>
        <fullName evidence="1">Proton channel protein M2</fullName>
    </alternativeName>
</protein>
<keyword id="KW-0025">Alternative splicing</keyword>
<keyword id="KW-1015">Disulfide bond</keyword>
<keyword id="KW-1032">Host cell membrane</keyword>
<keyword id="KW-1043">Host membrane</keyword>
<keyword id="KW-0945">Host-virus interaction</keyword>
<keyword id="KW-0375">Hydrogen ion transport</keyword>
<keyword id="KW-1083">Inhibition of host autophagy by virus</keyword>
<keyword id="KW-0407">Ion channel</keyword>
<keyword id="KW-0406">Ion transport</keyword>
<keyword id="KW-0449">Lipoprotein</keyword>
<keyword id="KW-0472">Membrane</keyword>
<keyword id="KW-0564">Palmitate</keyword>
<keyword id="KW-0597">Phosphoprotein</keyword>
<keyword id="KW-0735">Signal-anchor</keyword>
<keyword id="KW-0812">Transmembrane</keyword>
<keyword id="KW-1133">Transmembrane helix</keyword>
<keyword id="KW-0813">Transport</keyword>
<keyword id="KW-1182">Viral ion channel</keyword>
<keyword id="KW-0946">Virion</keyword>
<organism>
    <name type="scientific">Influenza A virus (strain A/Turkey/Minnesota/833/1980 H4N2)</name>
    <dbReference type="NCBI Taxonomy" id="383603"/>
    <lineage>
        <taxon>Viruses</taxon>
        <taxon>Riboviria</taxon>
        <taxon>Orthornavirae</taxon>
        <taxon>Negarnaviricota</taxon>
        <taxon>Polyploviricotina</taxon>
        <taxon>Insthoviricetes</taxon>
        <taxon>Articulavirales</taxon>
        <taxon>Orthomyxoviridae</taxon>
        <taxon>Alphainfluenzavirus</taxon>
        <taxon>Alphainfluenzavirus influenzae</taxon>
        <taxon>Influenza A virus</taxon>
    </lineage>
</organism>
<sequence length="97" mass="11185">MSLLTEVETPTRNGWECKCSDSSDPLVIAASIIGILHLILWILDRLFFKCIYRRLKYGLKRGPSTEGVPESMREEYRQEQQNAVDVDDGHFVNIELE</sequence>